<name>HIS6_SALHS</name>
<evidence type="ECO:0000255" key="1">
    <source>
        <dbReference type="HAMAP-Rule" id="MF_01013"/>
    </source>
</evidence>
<dbReference type="EC" id="4.3.2.10" evidence="1"/>
<dbReference type="EMBL" id="CP001120">
    <property type="protein sequence ID" value="ACF67216.1"/>
    <property type="molecule type" value="Genomic_DNA"/>
</dbReference>
<dbReference type="RefSeq" id="WP_000880125.1">
    <property type="nucleotide sequence ID" value="NC_011083.1"/>
</dbReference>
<dbReference type="SMR" id="B4T9N9"/>
<dbReference type="KEGG" id="seh:SeHA_C2303"/>
<dbReference type="HOGENOM" id="CLU_048577_4_0_6"/>
<dbReference type="UniPathway" id="UPA00031">
    <property type="reaction ID" value="UER00010"/>
</dbReference>
<dbReference type="Proteomes" id="UP000001866">
    <property type="component" value="Chromosome"/>
</dbReference>
<dbReference type="GO" id="GO:0005737">
    <property type="term" value="C:cytoplasm"/>
    <property type="evidence" value="ECO:0007669"/>
    <property type="project" value="UniProtKB-SubCell"/>
</dbReference>
<dbReference type="GO" id="GO:0000107">
    <property type="term" value="F:imidazoleglycerol-phosphate synthase activity"/>
    <property type="evidence" value="ECO:0007669"/>
    <property type="project" value="UniProtKB-UniRule"/>
</dbReference>
<dbReference type="GO" id="GO:0016829">
    <property type="term" value="F:lyase activity"/>
    <property type="evidence" value="ECO:0007669"/>
    <property type="project" value="UniProtKB-KW"/>
</dbReference>
<dbReference type="GO" id="GO:0000105">
    <property type="term" value="P:L-histidine biosynthetic process"/>
    <property type="evidence" value="ECO:0007669"/>
    <property type="project" value="UniProtKB-UniRule"/>
</dbReference>
<dbReference type="CDD" id="cd04731">
    <property type="entry name" value="HisF"/>
    <property type="match status" value="1"/>
</dbReference>
<dbReference type="FunFam" id="3.20.20.70:FF:000006">
    <property type="entry name" value="Imidazole glycerol phosphate synthase subunit HisF"/>
    <property type="match status" value="1"/>
</dbReference>
<dbReference type="Gene3D" id="3.20.20.70">
    <property type="entry name" value="Aldolase class I"/>
    <property type="match status" value="1"/>
</dbReference>
<dbReference type="HAMAP" id="MF_01013">
    <property type="entry name" value="HisF"/>
    <property type="match status" value="1"/>
</dbReference>
<dbReference type="InterPro" id="IPR013785">
    <property type="entry name" value="Aldolase_TIM"/>
</dbReference>
<dbReference type="InterPro" id="IPR006062">
    <property type="entry name" value="His_biosynth"/>
</dbReference>
<dbReference type="InterPro" id="IPR004651">
    <property type="entry name" value="HisF"/>
</dbReference>
<dbReference type="InterPro" id="IPR050064">
    <property type="entry name" value="IGPS_HisA/HisF"/>
</dbReference>
<dbReference type="InterPro" id="IPR011060">
    <property type="entry name" value="RibuloseP-bd_barrel"/>
</dbReference>
<dbReference type="NCBIfam" id="TIGR00735">
    <property type="entry name" value="hisF"/>
    <property type="match status" value="1"/>
</dbReference>
<dbReference type="PANTHER" id="PTHR21235:SF2">
    <property type="entry name" value="IMIDAZOLE GLYCEROL PHOSPHATE SYNTHASE HISHF"/>
    <property type="match status" value="1"/>
</dbReference>
<dbReference type="PANTHER" id="PTHR21235">
    <property type="entry name" value="IMIDAZOLE GLYCEROL PHOSPHATE SYNTHASE SUBUNIT HISF/H IGP SYNTHASE SUBUNIT HISF/H"/>
    <property type="match status" value="1"/>
</dbReference>
<dbReference type="Pfam" id="PF00977">
    <property type="entry name" value="His_biosynth"/>
    <property type="match status" value="1"/>
</dbReference>
<dbReference type="SUPFAM" id="SSF51366">
    <property type="entry name" value="Ribulose-phoshate binding barrel"/>
    <property type="match status" value="1"/>
</dbReference>
<comment type="function">
    <text evidence="1">IGPS catalyzes the conversion of PRFAR and glutamine to IGP, AICAR and glutamate. The HisF subunit catalyzes the cyclization activity that produces IGP and AICAR from PRFAR using the ammonia provided by the HisH subunit.</text>
</comment>
<comment type="catalytic activity">
    <reaction evidence="1">
        <text>5-[(5-phospho-1-deoxy-D-ribulos-1-ylimino)methylamino]-1-(5-phospho-beta-D-ribosyl)imidazole-4-carboxamide + L-glutamine = D-erythro-1-(imidazol-4-yl)glycerol 3-phosphate + 5-amino-1-(5-phospho-beta-D-ribosyl)imidazole-4-carboxamide + L-glutamate + H(+)</text>
        <dbReference type="Rhea" id="RHEA:24793"/>
        <dbReference type="ChEBI" id="CHEBI:15378"/>
        <dbReference type="ChEBI" id="CHEBI:29985"/>
        <dbReference type="ChEBI" id="CHEBI:58278"/>
        <dbReference type="ChEBI" id="CHEBI:58359"/>
        <dbReference type="ChEBI" id="CHEBI:58475"/>
        <dbReference type="ChEBI" id="CHEBI:58525"/>
        <dbReference type="EC" id="4.3.2.10"/>
    </reaction>
</comment>
<comment type="pathway">
    <text evidence="1">Amino-acid biosynthesis; L-histidine biosynthesis; L-histidine from 5-phospho-alpha-D-ribose 1-diphosphate: step 5/9.</text>
</comment>
<comment type="subunit">
    <text evidence="1">Heterodimer of HisH and HisF.</text>
</comment>
<comment type="subcellular location">
    <subcellularLocation>
        <location evidence="1">Cytoplasm</location>
    </subcellularLocation>
</comment>
<comment type="similarity">
    <text evidence="1">Belongs to the HisA/HisF family.</text>
</comment>
<keyword id="KW-0028">Amino-acid biosynthesis</keyword>
<keyword id="KW-0963">Cytoplasm</keyword>
<keyword id="KW-0368">Histidine biosynthesis</keyword>
<keyword id="KW-0456">Lyase</keyword>
<organism>
    <name type="scientific">Salmonella heidelberg (strain SL476)</name>
    <dbReference type="NCBI Taxonomy" id="454169"/>
    <lineage>
        <taxon>Bacteria</taxon>
        <taxon>Pseudomonadati</taxon>
        <taxon>Pseudomonadota</taxon>
        <taxon>Gammaproteobacteria</taxon>
        <taxon>Enterobacterales</taxon>
        <taxon>Enterobacteriaceae</taxon>
        <taxon>Salmonella</taxon>
    </lineage>
</organism>
<feature type="chain" id="PRO_1000190602" description="Imidazole glycerol phosphate synthase subunit HisF">
    <location>
        <begin position="1"/>
        <end position="258"/>
    </location>
</feature>
<feature type="active site" evidence="1">
    <location>
        <position position="11"/>
    </location>
</feature>
<feature type="active site" evidence="1">
    <location>
        <position position="130"/>
    </location>
</feature>
<sequence length="258" mass="28368">MLAKRIIPCLDVRDGQVVKGVQFRNHEIIGDIVPLAKRYADEGADELVFYDITASSDGRVVDKSWVARVAEVIDIPFCVAGGIRSIDDAAKILSFGADKISINSPALADPTLITRLADRFGVQCIVVGIDTWFDDATGKYHVNQYTGDENRTRVTQWETLDWVQEVQQRGAGEIVLNMMNQDGVRNGYDLTQLKKVRDVCRVPLIASGGAGTMEHFLEAFRDADVDGALAASVFHKQIINIGELKAYLAGQGVEIRIC</sequence>
<gene>
    <name evidence="1" type="primary">hisF</name>
    <name type="ordered locus">SeHA_C2303</name>
</gene>
<proteinExistence type="inferred from homology"/>
<protein>
    <recommendedName>
        <fullName evidence="1">Imidazole glycerol phosphate synthase subunit HisF</fullName>
        <ecNumber evidence="1">4.3.2.10</ecNumber>
    </recommendedName>
    <alternativeName>
        <fullName evidence="1">IGP synthase cyclase subunit</fullName>
    </alternativeName>
    <alternativeName>
        <fullName evidence="1">IGP synthase subunit HisF</fullName>
    </alternativeName>
    <alternativeName>
        <fullName evidence="1">ImGP synthase subunit HisF</fullName>
        <shortName evidence="1">IGPS subunit HisF</shortName>
    </alternativeName>
</protein>
<accession>B4T9N9</accession>
<reference key="1">
    <citation type="journal article" date="2011" name="J. Bacteriol.">
        <title>Comparative genomics of 28 Salmonella enterica isolates: evidence for CRISPR-mediated adaptive sublineage evolution.</title>
        <authorList>
            <person name="Fricke W.F."/>
            <person name="Mammel M.K."/>
            <person name="McDermott P.F."/>
            <person name="Tartera C."/>
            <person name="White D.G."/>
            <person name="Leclerc J.E."/>
            <person name="Ravel J."/>
            <person name="Cebula T.A."/>
        </authorList>
    </citation>
    <scope>NUCLEOTIDE SEQUENCE [LARGE SCALE GENOMIC DNA]</scope>
    <source>
        <strain>SL476</strain>
    </source>
</reference>